<protein>
    <recommendedName>
        <fullName evidence="1">Protein-L-isoaspartate O-methyltransferase</fullName>
        <ecNumber evidence="1">2.1.1.77</ecNumber>
    </recommendedName>
    <alternativeName>
        <fullName evidence="1">L-isoaspartyl protein carboxyl methyltransferase</fullName>
    </alternativeName>
    <alternativeName>
        <fullName evidence="1">Protein L-isoaspartyl methyltransferase</fullName>
    </alternativeName>
    <alternativeName>
        <fullName evidence="1">Protein-beta-aspartate methyltransferase</fullName>
        <shortName evidence="1">PIMT</shortName>
    </alternativeName>
</protein>
<dbReference type="EC" id="2.1.1.77" evidence="1"/>
<dbReference type="EMBL" id="CP000685">
    <property type="protein sequence ID" value="ABQ06460.1"/>
    <property type="molecule type" value="Genomic_DNA"/>
</dbReference>
<dbReference type="RefSeq" id="WP_012025429.1">
    <property type="nucleotide sequence ID" value="NC_009441.1"/>
</dbReference>
<dbReference type="SMR" id="A5FEA5"/>
<dbReference type="STRING" id="376686.Fjoh_3446"/>
<dbReference type="KEGG" id="fjo:Fjoh_3446"/>
<dbReference type="eggNOG" id="COG2518">
    <property type="taxonomic scope" value="Bacteria"/>
</dbReference>
<dbReference type="HOGENOM" id="CLU_055432_2_0_10"/>
<dbReference type="OrthoDB" id="9810066at2"/>
<dbReference type="Proteomes" id="UP000006694">
    <property type="component" value="Chromosome"/>
</dbReference>
<dbReference type="GO" id="GO:0005737">
    <property type="term" value="C:cytoplasm"/>
    <property type="evidence" value="ECO:0007669"/>
    <property type="project" value="UniProtKB-SubCell"/>
</dbReference>
<dbReference type="GO" id="GO:0004719">
    <property type="term" value="F:protein-L-isoaspartate (D-aspartate) O-methyltransferase activity"/>
    <property type="evidence" value="ECO:0007669"/>
    <property type="project" value="UniProtKB-UniRule"/>
</dbReference>
<dbReference type="GO" id="GO:0032259">
    <property type="term" value="P:methylation"/>
    <property type="evidence" value="ECO:0007669"/>
    <property type="project" value="UniProtKB-KW"/>
</dbReference>
<dbReference type="GO" id="GO:0036211">
    <property type="term" value="P:protein modification process"/>
    <property type="evidence" value="ECO:0007669"/>
    <property type="project" value="UniProtKB-UniRule"/>
</dbReference>
<dbReference type="GO" id="GO:0030091">
    <property type="term" value="P:protein repair"/>
    <property type="evidence" value="ECO:0007669"/>
    <property type="project" value="UniProtKB-UniRule"/>
</dbReference>
<dbReference type="CDD" id="cd02440">
    <property type="entry name" value="AdoMet_MTases"/>
    <property type="match status" value="1"/>
</dbReference>
<dbReference type="FunFam" id="3.40.50.150:FF:000010">
    <property type="entry name" value="Protein-L-isoaspartate O-methyltransferase"/>
    <property type="match status" value="1"/>
</dbReference>
<dbReference type="Gene3D" id="3.40.50.150">
    <property type="entry name" value="Vaccinia Virus protein VP39"/>
    <property type="match status" value="1"/>
</dbReference>
<dbReference type="HAMAP" id="MF_00090">
    <property type="entry name" value="PIMT"/>
    <property type="match status" value="1"/>
</dbReference>
<dbReference type="InterPro" id="IPR000682">
    <property type="entry name" value="PCMT"/>
</dbReference>
<dbReference type="InterPro" id="IPR029063">
    <property type="entry name" value="SAM-dependent_MTases_sf"/>
</dbReference>
<dbReference type="NCBIfam" id="TIGR00080">
    <property type="entry name" value="pimt"/>
    <property type="match status" value="1"/>
</dbReference>
<dbReference type="NCBIfam" id="NF001453">
    <property type="entry name" value="PRK00312.1"/>
    <property type="match status" value="1"/>
</dbReference>
<dbReference type="PANTHER" id="PTHR11579">
    <property type="entry name" value="PROTEIN-L-ISOASPARTATE O-METHYLTRANSFERASE"/>
    <property type="match status" value="1"/>
</dbReference>
<dbReference type="PANTHER" id="PTHR11579:SF0">
    <property type="entry name" value="PROTEIN-L-ISOASPARTATE(D-ASPARTATE) O-METHYLTRANSFERASE"/>
    <property type="match status" value="1"/>
</dbReference>
<dbReference type="Pfam" id="PF01135">
    <property type="entry name" value="PCMT"/>
    <property type="match status" value="1"/>
</dbReference>
<dbReference type="SUPFAM" id="SSF53335">
    <property type="entry name" value="S-adenosyl-L-methionine-dependent methyltransferases"/>
    <property type="match status" value="1"/>
</dbReference>
<dbReference type="PROSITE" id="PS01279">
    <property type="entry name" value="PCMT"/>
    <property type="match status" value="1"/>
</dbReference>
<organism>
    <name type="scientific">Flavobacterium johnsoniae (strain ATCC 17061 / DSM 2064 / JCM 8514 / BCRC 14874 / CCUG 350202 / NBRC 14942 / NCIMB 11054 / UW101)</name>
    <name type="common">Cytophaga johnsonae</name>
    <dbReference type="NCBI Taxonomy" id="376686"/>
    <lineage>
        <taxon>Bacteria</taxon>
        <taxon>Pseudomonadati</taxon>
        <taxon>Bacteroidota</taxon>
        <taxon>Flavobacteriia</taxon>
        <taxon>Flavobacteriales</taxon>
        <taxon>Flavobacteriaceae</taxon>
        <taxon>Flavobacterium</taxon>
    </lineage>
</organism>
<sequence length="213" mass="23954">MKDTAKHQGLRNQLVTTLEQKGITDRAVLDAIKKIPRHLFLNSSFEDFAYQDKAFPIGAGQTISQPYTVAFQSQLLEVKKDHKILEIGTGSGYQTAVLFMLGAKVYTVERQSELFKTTSNLFPKLNIRPKHVTFGDGYKGLPNFAPFDSIIVTAGAPFIPQPLMAQLKIGGRLVIPLGEDVQIMTLLIRKNETQFEKHEFGEFRFVPLLEDKN</sequence>
<keyword id="KW-0963">Cytoplasm</keyword>
<keyword id="KW-0489">Methyltransferase</keyword>
<keyword id="KW-0949">S-adenosyl-L-methionine</keyword>
<keyword id="KW-0808">Transferase</keyword>
<accession>A5FEA5</accession>
<feature type="chain" id="PRO_1000093255" description="Protein-L-isoaspartate O-methyltransferase">
    <location>
        <begin position="1"/>
        <end position="213"/>
    </location>
</feature>
<feature type="active site" evidence="1">
    <location>
        <position position="64"/>
    </location>
</feature>
<gene>
    <name evidence="1" type="primary">pcm</name>
    <name type="ordered locus">Fjoh_3446</name>
</gene>
<comment type="function">
    <text evidence="1">Catalyzes the methyl esterification of L-isoaspartyl residues in peptides and proteins that result from spontaneous decomposition of normal L-aspartyl and L-asparaginyl residues. It plays a role in the repair and/or degradation of damaged proteins.</text>
</comment>
<comment type="catalytic activity">
    <reaction evidence="1">
        <text>[protein]-L-isoaspartate + S-adenosyl-L-methionine = [protein]-L-isoaspartate alpha-methyl ester + S-adenosyl-L-homocysteine</text>
        <dbReference type="Rhea" id="RHEA:12705"/>
        <dbReference type="Rhea" id="RHEA-COMP:12143"/>
        <dbReference type="Rhea" id="RHEA-COMP:12144"/>
        <dbReference type="ChEBI" id="CHEBI:57856"/>
        <dbReference type="ChEBI" id="CHEBI:59789"/>
        <dbReference type="ChEBI" id="CHEBI:90596"/>
        <dbReference type="ChEBI" id="CHEBI:90598"/>
        <dbReference type="EC" id="2.1.1.77"/>
    </reaction>
</comment>
<comment type="subcellular location">
    <subcellularLocation>
        <location evidence="1">Cytoplasm</location>
    </subcellularLocation>
</comment>
<comment type="similarity">
    <text evidence="1">Belongs to the methyltransferase superfamily. L-isoaspartyl/D-aspartyl protein methyltransferase family.</text>
</comment>
<proteinExistence type="inferred from homology"/>
<evidence type="ECO:0000255" key="1">
    <source>
        <dbReference type="HAMAP-Rule" id="MF_00090"/>
    </source>
</evidence>
<name>PIMT_FLAJ1</name>
<reference key="1">
    <citation type="journal article" date="2009" name="Appl. Environ. Microbiol.">
        <title>Novel features of the polysaccharide-digesting gliding bacterium Flavobacterium johnsoniae as revealed by genome sequence analysis.</title>
        <authorList>
            <person name="McBride M.J."/>
            <person name="Xie G."/>
            <person name="Martens E.C."/>
            <person name="Lapidus A."/>
            <person name="Henrissat B."/>
            <person name="Rhodes R.G."/>
            <person name="Goltsman E."/>
            <person name="Wang W."/>
            <person name="Xu J."/>
            <person name="Hunnicutt D.W."/>
            <person name="Staroscik A.M."/>
            <person name="Hoover T.R."/>
            <person name="Cheng Y.Q."/>
            <person name="Stein J.L."/>
        </authorList>
    </citation>
    <scope>NUCLEOTIDE SEQUENCE [LARGE SCALE GENOMIC DNA]</scope>
    <source>
        <strain>ATCC 17061 / DSM 2064 / JCM 8514 / BCRC 14874 / CCUG 350202 / NBRC 14942 / NCIMB 11054 / UW101</strain>
    </source>
</reference>